<evidence type="ECO:0000255" key="1">
    <source>
        <dbReference type="HAMAP-Rule" id="MF_00736"/>
    </source>
</evidence>
<evidence type="ECO:0000305" key="2"/>
<accession>P62434</accession>
<feature type="chain" id="PRO_0000104291" description="Large ribosomal subunit protein uL11">
    <location>
        <begin position="1"/>
        <end position="141"/>
    </location>
</feature>
<comment type="function">
    <text evidence="1">Forms part of the ribosomal stalk which helps the ribosome interact with GTP-bound translation factors.</text>
</comment>
<comment type="subunit">
    <text evidence="1">Part of the ribosomal stalk of the 50S ribosomal subunit. Interacts with L10 and the large rRNA to form the base of the stalk. L10 forms an elongated spine to which L12 dimers bind in a sequential fashion forming a multimeric L10(L12)X complex.</text>
</comment>
<comment type="PTM">
    <text evidence="1">One or more lysine residues are methylated.</text>
</comment>
<comment type="similarity">
    <text evidence="1">Belongs to the universal ribosomal protein uL11 family.</text>
</comment>
<reference key="1">
    <citation type="journal article" date="2003" name="Science">
        <title>Genome of Geobacter sulfurreducens: metal reduction in subsurface environments.</title>
        <authorList>
            <person name="Methe B.A."/>
            <person name="Nelson K.E."/>
            <person name="Eisen J.A."/>
            <person name="Paulsen I.T."/>
            <person name="Nelson W.C."/>
            <person name="Heidelberg J.F."/>
            <person name="Wu D."/>
            <person name="Wu M."/>
            <person name="Ward N.L."/>
            <person name="Beanan M.J."/>
            <person name="Dodson R.J."/>
            <person name="Madupu R."/>
            <person name="Brinkac L.M."/>
            <person name="Daugherty S.C."/>
            <person name="DeBoy R.T."/>
            <person name="Durkin A.S."/>
            <person name="Gwinn M.L."/>
            <person name="Kolonay J.F."/>
            <person name="Sullivan S.A."/>
            <person name="Haft D.H."/>
            <person name="Selengut J."/>
            <person name="Davidsen T.M."/>
            <person name="Zafar N."/>
            <person name="White O."/>
            <person name="Tran B."/>
            <person name="Romero C."/>
            <person name="Forberger H.A."/>
            <person name="Weidman J.F."/>
            <person name="Khouri H.M."/>
            <person name="Feldblyum T.V."/>
            <person name="Utterback T.R."/>
            <person name="Van Aken S.E."/>
            <person name="Lovley D.R."/>
            <person name="Fraser C.M."/>
        </authorList>
    </citation>
    <scope>NUCLEOTIDE SEQUENCE [LARGE SCALE GENOMIC DNA]</scope>
    <source>
        <strain>ATCC 51573 / DSM 12127 / PCA</strain>
    </source>
</reference>
<proteinExistence type="inferred from homology"/>
<protein>
    <recommendedName>
        <fullName evidence="1">Large ribosomal subunit protein uL11</fullName>
    </recommendedName>
    <alternativeName>
        <fullName evidence="2">50S ribosomal protein L11</fullName>
    </alternativeName>
</protein>
<dbReference type="EMBL" id="AE017180">
    <property type="protein sequence ID" value="AAR36259.1"/>
    <property type="molecule type" value="Genomic_DNA"/>
</dbReference>
<dbReference type="RefSeq" id="NP_953909.1">
    <property type="nucleotide sequence ID" value="NC_002939.5"/>
</dbReference>
<dbReference type="RefSeq" id="WP_010943497.1">
    <property type="nucleotide sequence ID" value="NC_002939.5"/>
</dbReference>
<dbReference type="SMR" id="P62434"/>
<dbReference type="FunCoup" id="P62434">
    <property type="interactions" value="659"/>
</dbReference>
<dbReference type="STRING" id="243231.GSU2867"/>
<dbReference type="EnsemblBacteria" id="AAR36259">
    <property type="protein sequence ID" value="AAR36259"/>
    <property type="gene ID" value="GSU2867"/>
</dbReference>
<dbReference type="KEGG" id="gsu:GSU2867"/>
<dbReference type="PATRIC" id="fig|243231.5.peg.2895"/>
<dbReference type="eggNOG" id="COG0080">
    <property type="taxonomic scope" value="Bacteria"/>
</dbReference>
<dbReference type="HOGENOM" id="CLU_074237_2_1_7"/>
<dbReference type="InParanoid" id="P62434"/>
<dbReference type="OrthoDB" id="9802408at2"/>
<dbReference type="Proteomes" id="UP000000577">
    <property type="component" value="Chromosome"/>
</dbReference>
<dbReference type="GO" id="GO:0022625">
    <property type="term" value="C:cytosolic large ribosomal subunit"/>
    <property type="evidence" value="ECO:0000318"/>
    <property type="project" value="GO_Central"/>
</dbReference>
<dbReference type="GO" id="GO:0070180">
    <property type="term" value="F:large ribosomal subunit rRNA binding"/>
    <property type="evidence" value="ECO:0000318"/>
    <property type="project" value="GO_Central"/>
</dbReference>
<dbReference type="GO" id="GO:0003735">
    <property type="term" value="F:structural constituent of ribosome"/>
    <property type="evidence" value="ECO:0000318"/>
    <property type="project" value="GO_Central"/>
</dbReference>
<dbReference type="GO" id="GO:0006412">
    <property type="term" value="P:translation"/>
    <property type="evidence" value="ECO:0000318"/>
    <property type="project" value="GO_Central"/>
</dbReference>
<dbReference type="CDD" id="cd00349">
    <property type="entry name" value="Ribosomal_L11"/>
    <property type="match status" value="1"/>
</dbReference>
<dbReference type="FunFam" id="1.10.10.250:FF:000001">
    <property type="entry name" value="50S ribosomal protein L11"/>
    <property type="match status" value="1"/>
</dbReference>
<dbReference type="FunFam" id="3.30.1550.10:FF:000001">
    <property type="entry name" value="50S ribosomal protein L11"/>
    <property type="match status" value="1"/>
</dbReference>
<dbReference type="Gene3D" id="1.10.10.250">
    <property type="entry name" value="Ribosomal protein L11, C-terminal domain"/>
    <property type="match status" value="1"/>
</dbReference>
<dbReference type="Gene3D" id="3.30.1550.10">
    <property type="entry name" value="Ribosomal protein L11/L12, N-terminal domain"/>
    <property type="match status" value="1"/>
</dbReference>
<dbReference type="HAMAP" id="MF_00736">
    <property type="entry name" value="Ribosomal_uL11"/>
    <property type="match status" value="1"/>
</dbReference>
<dbReference type="InterPro" id="IPR000911">
    <property type="entry name" value="Ribosomal_uL11"/>
</dbReference>
<dbReference type="InterPro" id="IPR006519">
    <property type="entry name" value="Ribosomal_uL11_bac-typ"/>
</dbReference>
<dbReference type="InterPro" id="IPR020783">
    <property type="entry name" value="Ribosomal_uL11_C"/>
</dbReference>
<dbReference type="InterPro" id="IPR036769">
    <property type="entry name" value="Ribosomal_uL11_C_sf"/>
</dbReference>
<dbReference type="InterPro" id="IPR020784">
    <property type="entry name" value="Ribosomal_uL11_N"/>
</dbReference>
<dbReference type="InterPro" id="IPR036796">
    <property type="entry name" value="Ribosomal_uL11_N_sf"/>
</dbReference>
<dbReference type="NCBIfam" id="TIGR01632">
    <property type="entry name" value="L11_bact"/>
    <property type="match status" value="1"/>
</dbReference>
<dbReference type="PANTHER" id="PTHR11661">
    <property type="entry name" value="60S RIBOSOMAL PROTEIN L12"/>
    <property type="match status" value="1"/>
</dbReference>
<dbReference type="PANTHER" id="PTHR11661:SF1">
    <property type="entry name" value="LARGE RIBOSOMAL SUBUNIT PROTEIN UL11M"/>
    <property type="match status" value="1"/>
</dbReference>
<dbReference type="Pfam" id="PF00298">
    <property type="entry name" value="Ribosomal_L11"/>
    <property type="match status" value="1"/>
</dbReference>
<dbReference type="Pfam" id="PF03946">
    <property type="entry name" value="Ribosomal_L11_N"/>
    <property type="match status" value="1"/>
</dbReference>
<dbReference type="SMART" id="SM00649">
    <property type="entry name" value="RL11"/>
    <property type="match status" value="1"/>
</dbReference>
<dbReference type="SUPFAM" id="SSF54747">
    <property type="entry name" value="Ribosomal L11/L12e N-terminal domain"/>
    <property type="match status" value="1"/>
</dbReference>
<dbReference type="SUPFAM" id="SSF46906">
    <property type="entry name" value="Ribosomal protein L11, C-terminal domain"/>
    <property type="match status" value="1"/>
</dbReference>
<dbReference type="PROSITE" id="PS00359">
    <property type="entry name" value="RIBOSOMAL_L11"/>
    <property type="match status" value="1"/>
</dbReference>
<sequence length="141" mass="15051">MAKKITGYIKLQIPAAKANPSPPIGPALGQHGVNIMEFCKAFNAKTQADEGTIIPVVITVYADRSFTFITKVPPMSVLIKKAVGIESGSSVPNKNKVGKLTREQVREIATKKLPDMNAASLEAAMRTVEGTARSMGVEIVN</sequence>
<organism>
    <name type="scientific">Geobacter sulfurreducens (strain ATCC 51573 / DSM 12127 / PCA)</name>
    <dbReference type="NCBI Taxonomy" id="243231"/>
    <lineage>
        <taxon>Bacteria</taxon>
        <taxon>Pseudomonadati</taxon>
        <taxon>Thermodesulfobacteriota</taxon>
        <taxon>Desulfuromonadia</taxon>
        <taxon>Geobacterales</taxon>
        <taxon>Geobacteraceae</taxon>
        <taxon>Geobacter</taxon>
    </lineage>
</organism>
<name>RL11_GEOSL</name>
<keyword id="KW-0488">Methylation</keyword>
<keyword id="KW-1185">Reference proteome</keyword>
<keyword id="KW-0687">Ribonucleoprotein</keyword>
<keyword id="KW-0689">Ribosomal protein</keyword>
<keyword id="KW-0694">RNA-binding</keyword>
<keyword id="KW-0699">rRNA-binding</keyword>
<gene>
    <name evidence="1" type="primary">rplK</name>
    <name type="ordered locus">GSU2867</name>
</gene>